<accession>P20137</accession>
<sequence length="28" mass="3389">PNYKLTYFNLRGRAEISRYLFAYAGIKY</sequence>
<evidence type="ECO:0000250" key="1">
    <source>
        <dbReference type="UniProtKB" id="O60760"/>
    </source>
</evidence>
<evidence type="ECO:0000305" key="2"/>
<name>GST5_CHICK</name>
<comment type="function">
    <text>Conjugation of reduced glutathione to a wide number of exogenous and endogenous hydrophobic electrophiles.</text>
</comment>
<comment type="catalytic activity">
    <reaction>
        <text>RX + glutathione = an S-substituted glutathione + a halide anion + H(+)</text>
        <dbReference type="Rhea" id="RHEA:16437"/>
        <dbReference type="ChEBI" id="CHEBI:15378"/>
        <dbReference type="ChEBI" id="CHEBI:16042"/>
        <dbReference type="ChEBI" id="CHEBI:17792"/>
        <dbReference type="ChEBI" id="CHEBI:57925"/>
        <dbReference type="ChEBI" id="CHEBI:90779"/>
        <dbReference type="EC" id="2.5.1.18"/>
    </reaction>
</comment>
<comment type="subunit">
    <text>Homodimer.</text>
</comment>
<comment type="subcellular location">
    <subcellularLocation>
        <location>Cytoplasm</location>
    </subcellularLocation>
</comment>
<comment type="similarity">
    <text evidence="2">Belongs to the GST superfamily. Sigma family.</text>
</comment>
<proteinExistence type="evidence at protein level"/>
<organism>
    <name type="scientific">Gallus gallus</name>
    <name type="common">Chicken</name>
    <dbReference type="NCBI Taxonomy" id="9031"/>
    <lineage>
        <taxon>Eukaryota</taxon>
        <taxon>Metazoa</taxon>
        <taxon>Chordata</taxon>
        <taxon>Craniata</taxon>
        <taxon>Vertebrata</taxon>
        <taxon>Euteleostomi</taxon>
        <taxon>Archelosauria</taxon>
        <taxon>Archosauria</taxon>
        <taxon>Dinosauria</taxon>
        <taxon>Saurischia</taxon>
        <taxon>Theropoda</taxon>
        <taxon>Coelurosauria</taxon>
        <taxon>Aves</taxon>
        <taxon>Neognathae</taxon>
        <taxon>Galloanserae</taxon>
        <taxon>Galliformes</taxon>
        <taxon>Phasianidae</taxon>
        <taxon>Phasianinae</taxon>
        <taxon>Gallus</taxon>
    </lineage>
</organism>
<protein>
    <recommendedName>
        <fullName>Glutathione S-transferase 5</fullName>
        <ecNumber>2.5.1.18</ecNumber>
    </recommendedName>
    <alternativeName>
        <fullName>GST class-sigma</fullName>
    </alternativeName>
    <alternativeName>
        <fullName>GST-CL5</fullName>
    </alternativeName>
</protein>
<keyword id="KW-0963">Cytoplasm</keyword>
<keyword id="KW-0903">Direct protein sequencing</keyword>
<keyword id="KW-1185">Reference proteome</keyword>
<keyword id="KW-0808">Transferase</keyword>
<dbReference type="EC" id="2.5.1.18"/>
<dbReference type="PIR" id="C33948">
    <property type="entry name" value="C33948"/>
</dbReference>
<dbReference type="SMR" id="P20137"/>
<dbReference type="InParanoid" id="P20137"/>
<dbReference type="Proteomes" id="UP000000539">
    <property type="component" value="Unassembled WGS sequence"/>
</dbReference>
<dbReference type="GO" id="GO:0005737">
    <property type="term" value="C:cytoplasm"/>
    <property type="evidence" value="ECO:0007669"/>
    <property type="project" value="UniProtKB-SubCell"/>
</dbReference>
<dbReference type="GO" id="GO:0004364">
    <property type="term" value="F:glutathione transferase activity"/>
    <property type="evidence" value="ECO:0007669"/>
    <property type="project" value="UniProtKB-EC"/>
</dbReference>
<dbReference type="Gene3D" id="3.40.30.10">
    <property type="entry name" value="Glutaredoxin"/>
    <property type="match status" value="1"/>
</dbReference>
<dbReference type="InterPro" id="IPR004045">
    <property type="entry name" value="Glutathione_S-Trfase_N"/>
</dbReference>
<dbReference type="InterPro" id="IPR036249">
    <property type="entry name" value="Thioredoxin-like_sf"/>
</dbReference>
<dbReference type="SUPFAM" id="SSF52833">
    <property type="entry name" value="Thioredoxin-like"/>
    <property type="match status" value="1"/>
</dbReference>
<dbReference type="PROSITE" id="PS50404">
    <property type="entry name" value="GST_NTER"/>
    <property type="match status" value="1"/>
</dbReference>
<feature type="chain" id="PRO_0000185921" description="Glutathione S-transferase 5">
    <location>
        <begin position="1"/>
        <end position="28" status="greater than"/>
    </location>
</feature>
<feature type="domain" description="GST N-terminal">
    <location>
        <begin position="1"/>
        <end position="28" status="greater than"/>
    </location>
</feature>
<feature type="binding site" evidence="1">
    <location>
        <position position="7"/>
    </location>
    <ligand>
        <name>glutathione</name>
        <dbReference type="ChEBI" id="CHEBI:57925"/>
    </ligand>
</feature>
<feature type="non-terminal residue">
    <location>
        <position position="28"/>
    </location>
</feature>
<reference key="1">
    <citation type="journal article" date="1990" name="Biochemistry">
        <title>Characterization of glutathione S-transferases from day-old chick livers.</title>
        <authorList>
            <person name="Chang L.-H."/>
            <person name="Chuang L.-F."/>
            <person name="Tsai C.-P."/>
            <person name="Tu C.-P.D."/>
            <person name="Tam M.F."/>
        </authorList>
    </citation>
    <scope>PROTEIN SEQUENCE</scope>
    <source>
        <tissue>Liver</tissue>
    </source>
</reference>